<evidence type="ECO:0000255" key="1">
    <source>
        <dbReference type="PROSITE-ProRule" id="PRU00303"/>
    </source>
</evidence>
<evidence type="ECO:0000305" key="2"/>
<sequence length="484" mass="52864">MTKSLLSLAVTAFILGGCSLIPDYQTPEAPVAAQWPQGPAYSPTQSADVAAAEQGWRQFFHDPALQQLIQTSLVNNRDLRVAALNLDAYRAQYRIQRADLFPAVSATGSGSRQRVPANMSQTGESGITSQYSATLGVSAYELDLFGRVRSLTEQALETYLSSEQARRSTQIALVASVANAYYTWQADQALFKLTEETLKTYEESYNLTRRSNEVGVASALDVSQARTAVEGARVKYSQYQRLVAQDVNSLTVLLGTGIPADLAKPLELDADQLAEVPAGLPSDILQRRPDIQEAEHLLKAANANIGAARAAFFPSISLTANAGSLSPDMGHLFSGGQGTWLFQPQINLPIFNAGSLKASLDYSKIQKDINVAKYEKTIQTAFQEVSDGLAARKTFEEQLQAQRDLVQANQDYYRLAERRYRIGIDSNLTFLDAQRNLFSAQQALIGDRLSQLTSEVNLYKALGGGWYEQTGQANQQASVETPKG</sequence>
<keyword id="KW-0998">Cell outer membrane</keyword>
<keyword id="KW-0449">Lipoprotein</keyword>
<keyword id="KW-0472">Membrane</keyword>
<keyword id="KW-0564">Palmitate</keyword>
<keyword id="KW-1185">Reference proteome</keyword>
<keyword id="KW-0732">Signal</keyword>
<keyword id="KW-0812">Transmembrane</keyword>
<keyword id="KW-1134">Transmembrane beta strand</keyword>
<keyword id="KW-0813">Transport</keyword>
<feature type="signal peptide" evidence="1">
    <location>
        <begin position="1"/>
        <end position="17"/>
    </location>
</feature>
<feature type="chain" id="PRO_0000031001" description="Probable efflux pump outer membrane protein TtgC">
    <location>
        <begin position="18"/>
        <end position="484"/>
    </location>
</feature>
<feature type="lipid moiety-binding region" description="N-palmitoyl cysteine" evidence="1">
    <location>
        <position position="18"/>
    </location>
</feature>
<feature type="lipid moiety-binding region" description="S-diacylglycerol cysteine" evidence="1">
    <location>
        <position position="18"/>
    </location>
</feature>
<protein>
    <recommendedName>
        <fullName>Probable efflux pump outer membrane protein TtgC</fullName>
    </recommendedName>
</protein>
<organism>
    <name type="scientific">Pseudomonas putida (strain ATCC 47054 / DSM 6125 / CFBP 8728 / NCIMB 11950 / KT2440)</name>
    <dbReference type="NCBI Taxonomy" id="160488"/>
    <lineage>
        <taxon>Bacteria</taxon>
        <taxon>Pseudomonadati</taxon>
        <taxon>Pseudomonadota</taxon>
        <taxon>Gammaproteobacteria</taxon>
        <taxon>Pseudomonadales</taxon>
        <taxon>Pseudomonadaceae</taxon>
        <taxon>Pseudomonas</taxon>
    </lineage>
</organism>
<gene>
    <name type="primary">ttgC</name>
    <name type="ordered locus">PP_1384</name>
</gene>
<comment type="function">
    <text>Probable outer membrane component of the TtgABC efflux pump with unknown specificity.</text>
</comment>
<comment type="subcellular location">
    <subcellularLocation>
        <location evidence="2">Cell outer membrane</location>
        <topology evidence="1">Lipid-anchor</topology>
    </subcellularLocation>
</comment>
<comment type="similarity">
    <text evidence="2">Belongs to the outer membrane factor (OMF) (TC 1.B.17) family.</text>
</comment>
<comment type="caution">
    <text evidence="2">There are 4 nearly identical operons in various strains of P.putida. The ttgABC operon of strain DOT-T1E and the mepABC operon of strain KT2442-TOL function in solvent and antibiotic efflux; however in strain S12 the arpABC operon functions only in antibiotic efflux. This may be due to different protein expression levels. In KT2400 this operon does not seem to function in toluene efflux.</text>
</comment>
<proteinExistence type="evidence at protein level"/>
<accession>Q88N32</accession>
<name>TTGC_PSEPK</name>
<dbReference type="EMBL" id="AE015451">
    <property type="protein sequence ID" value="AAN67007.1"/>
    <property type="molecule type" value="Genomic_DNA"/>
</dbReference>
<dbReference type="RefSeq" id="NP_743543.1">
    <property type="nucleotide sequence ID" value="NC_002947.4"/>
</dbReference>
<dbReference type="RefSeq" id="WP_010952492.1">
    <property type="nucleotide sequence ID" value="NZ_CP169744.1"/>
</dbReference>
<dbReference type="SMR" id="Q88N32"/>
<dbReference type="STRING" id="160488.PP_1384"/>
<dbReference type="PaxDb" id="160488-PP_1384"/>
<dbReference type="KEGG" id="ppu:PP_1384"/>
<dbReference type="PATRIC" id="fig|160488.4.peg.1468"/>
<dbReference type="eggNOG" id="COG1538">
    <property type="taxonomic scope" value="Bacteria"/>
</dbReference>
<dbReference type="HOGENOM" id="CLU_012817_13_3_6"/>
<dbReference type="OrthoDB" id="9770517at2"/>
<dbReference type="PhylomeDB" id="Q88N32"/>
<dbReference type="BioCyc" id="PPUT160488:G1G01-1474-MONOMER"/>
<dbReference type="Proteomes" id="UP000000556">
    <property type="component" value="Chromosome"/>
</dbReference>
<dbReference type="GO" id="GO:0009279">
    <property type="term" value="C:cell outer membrane"/>
    <property type="evidence" value="ECO:0007669"/>
    <property type="project" value="UniProtKB-SubCell"/>
</dbReference>
<dbReference type="GO" id="GO:0015562">
    <property type="term" value="F:efflux transmembrane transporter activity"/>
    <property type="evidence" value="ECO:0007669"/>
    <property type="project" value="InterPro"/>
</dbReference>
<dbReference type="Gene3D" id="1.20.1600.10">
    <property type="entry name" value="Outer membrane efflux proteins (OEP)"/>
    <property type="match status" value="1"/>
</dbReference>
<dbReference type="Gene3D" id="2.20.200.10">
    <property type="entry name" value="Outer membrane efflux proteins (OEP)"/>
    <property type="match status" value="1"/>
</dbReference>
<dbReference type="InterPro" id="IPR050737">
    <property type="entry name" value="OMF"/>
</dbReference>
<dbReference type="InterPro" id="IPR003423">
    <property type="entry name" value="OMP_efflux"/>
</dbReference>
<dbReference type="InterPro" id="IPR010131">
    <property type="entry name" value="RND_efflux_OM_lipoprot_NodT"/>
</dbReference>
<dbReference type="NCBIfam" id="TIGR01845">
    <property type="entry name" value="outer_NodT"/>
    <property type="match status" value="1"/>
</dbReference>
<dbReference type="PANTHER" id="PTHR30203:SF32">
    <property type="entry name" value="CATION EFFLUX SYSTEM PROTEIN CUSC"/>
    <property type="match status" value="1"/>
</dbReference>
<dbReference type="PANTHER" id="PTHR30203">
    <property type="entry name" value="OUTER MEMBRANE CATION EFFLUX PROTEIN"/>
    <property type="match status" value="1"/>
</dbReference>
<dbReference type="Pfam" id="PF02321">
    <property type="entry name" value="OEP"/>
    <property type="match status" value="2"/>
</dbReference>
<dbReference type="SUPFAM" id="SSF56954">
    <property type="entry name" value="Outer membrane efflux proteins (OEP)"/>
    <property type="match status" value="1"/>
</dbReference>
<dbReference type="PROSITE" id="PS51257">
    <property type="entry name" value="PROKAR_LIPOPROTEIN"/>
    <property type="match status" value="1"/>
</dbReference>
<reference key="1">
    <citation type="journal article" date="2002" name="Environ. Microbiol.">
        <title>Complete genome sequence and comparative analysis of the metabolically versatile Pseudomonas putida KT2440.</title>
        <authorList>
            <person name="Nelson K.E."/>
            <person name="Weinel C."/>
            <person name="Paulsen I.T."/>
            <person name="Dodson R.J."/>
            <person name="Hilbert H."/>
            <person name="Martins dos Santos V.A.P."/>
            <person name="Fouts D.E."/>
            <person name="Gill S.R."/>
            <person name="Pop M."/>
            <person name="Holmes M."/>
            <person name="Brinkac L.M."/>
            <person name="Beanan M.J."/>
            <person name="DeBoy R.T."/>
            <person name="Daugherty S.C."/>
            <person name="Kolonay J.F."/>
            <person name="Madupu R."/>
            <person name="Nelson W.C."/>
            <person name="White O."/>
            <person name="Peterson J.D."/>
            <person name="Khouri H.M."/>
            <person name="Hance I."/>
            <person name="Chris Lee P."/>
            <person name="Holtzapple E.K."/>
            <person name="Scanlan D."/>
            <person name="Tran K."/>
            <person name="Moazzez A."/>
            <person name="Utterback T.R."/>
            <person name="Rizzo M."/>
            <person name="Lee K."/>
            <person name="Kosack D."/>
            <person name="Moestl D."/>
            <person name="Wedler H."/>
            <person name="Lauber J."/>
            <person name="Stjepandic D."/>
            <person name="Hoheisel J."/>
            <person name="Straetz M."/>
            <person name="Heim S."/>
            <person name="Kiewitz C."/>
            <person name="Eisen J.A."/>
            <person name="Timmis K.N."/>
            <person name="Duesterhoeft A."/>
            <person name="Tuemmler B."/>
            <person name="Fraser C.M."/>
        </authorList>
    </citation>
    <scope>NUCLEOTIDE SEQUENCE [LARGE SCALE GENOMIC DNA]</scope>
    <source>
        <strain>ATCC 47054 / DSM 6125 / CFBP 8728 / NCIMB 11950 / KT2440</strain>
    </source>
</reference>
<reference key="2">
    <citation type="journal article" date="2003" name="Extremophiles">
        <title>Comparative genomic analysis of solvent extrusion pumps in Pseudomonas strains exhibiting different degrees of solvent tolerance.</title>
        <authorList>
            <person name="Segura A."/>
            <person name="Rojas A."/>
            <person name="Hurtado A."/>
            <person name="Huertas M.J."/>
            <person name="Ramos J.L."/>
        </authorList>
    </citation>
    <scope>CHARACTERIZATION</scope>
</reference>